<proteinExistence type="inferred from homology"/>
<name>METI_HAEIN</name>
<organism>
    <name type="scientific">Haemophilus influenzae (strain ATCC 51907 / DSM 11121 / KW20 / Rd)</name>
    <dbReference type="NCBI Taxonomy" id="71421"/>
    <lineage>
        <taxon>Bacteria</taxon>
        <taxon>Pseudomonadati</taxon>
        <taxon>Pseudomonadota</taxon>
        <taxon>Gammaproteobacteria</taxon>
        <taxon>Pasteurellales</taxon>
        <taxon>Pasteurellaceae</taxon>
        <taxon>Haemophilus</taxon>
    </lineage>
</organism>
<keyword id="KW-0997">Cell inner membrane</keyword>
<keyword id="KW-1003">Cell membrane</keyword>
<keyword id="KW-0472">Membrane</keyword>
<keyword id="KW-1185">Reference proteome</keyword>
<keyword id="KW-0812">Transmembrane</keyword>
<keyword id="KW-1133">Transmembrane helix</keyword>
<keyword id="KW-0813">Transport</keyword>
<reference key="1">
    <citation type="journal article" date="1995" name="Science">
        <title>Whole-genome random sequencing and assembly of Haemophilus influenzae Rd.</title>
        <authorList>
            <person name="Fleischmann R.D."/>
            <person name="Adams M.D."/>
            <person name="White O."/>
            <person name="Clayton R.A."/>
            <person name="Kirkness E.F."/>
            <person name="Kerlavage A.R."/>
            <person name="Bult C.J."/>
            <person name="Tomb J.-F."/>
            <person name="Dougherty B.A."/>
            <person name="Merrick J.M."/>
            <person name="McKenney K."/>
            <person name="Sutton G.G."/>
            <person name="FitzHugh W."/>
            <person name="Fields C.A."/>
            <person name="Gocayne J.D."/>
            <person name="Scott J.D."/>
            <person name="Shirley R."/>
            <person name="Liu L.-I."/>
            <person name="Glodek A."/>
            <person name="Kelley J.M."/>
            <person name="Weidman J.F."/>
            <person name="Phillips C.A."/>
            <person name="Spriggs T."/>
            <person name="Hedblom E."/>
            <person name="Cotton M.D."/>
            <person name="Utterback T.R."/>
            <person name="Hanna M.C."/>
            <person name="Nguyen D.T."/>
            <person name="Saudek D.M."/>
            <person name="Brandon R.C."/>
            <person name="Fine L.D."/>
            <person name="Fritchman J.L."/>
            <person name="Fuhrmann J.L."/>
            <person name="Geoghagen N.S.M."/>
            <person name="Gnehm C.L."/>
            <person name="McDonald L.A."/>
            <person name="Small K.V."/>
            <person name="Fraser C.M."/>
            <person name="Smith H.O."/>
            <person name="Venter J.C."/>
        </authorList>
    </citation>
    <scope>NUCLEOTIDE SEQUENCE [LARGE SCALE GENOMIC DNA]</scope>
    <source>
        <strain>ATCC 51907 / DSM 11121 / KW20 / Rd</strain>
    </source>
</reference>
<reference key="2">
    <citation type="submission" date="1995-09" db="UniProtKB">
        <authorList>
            <person name="Koonin E.V."/>
            <person name="Rudd K.E."/>
        </authorList>
    </citation>
    <scope>IDENTIFICATION</scope>
</reference>
<dbReference type="EMBL" id="L42023">
    <property type="status" value="NOT_ANNOTATED_CDS"/>
    <property type="molecule type" value="Genomic_DNA"/>
</dbReference>
<dbReference type="SMR" id="P46492"/>
<dbReference type="PhylomeDB" id="P46492"/>
<dbReference type="Proteomes" id="UP000000579">
    <property type="component" value="Chromosome"/>
</dbReference>
<dbReference type="GO" id="GO:0005886">
    <property type="term" value="C:plasma membrane"/>
    <property type="evidence" value="ECO:0000318"/>
    <property type="project" value="GO_Central"/>
</dbReference>
<dbReference type="GO" id="GO:0048473">
    <property type="term" value="P:D-methionine transmembrane transport"/>
    <property type="evidence" value="ECO:0000318"/>
    <property type="project" value="GO_Central"/>
</dbReference>
<dbReference type="CDD" id="cd06261">
    <property type="entry name" value="TM_PBP2"/>
    <property type="match status" value="1"/>
</dbReference>
<dbReference type="FunFam" id="1.10.3720.10:FF:000002">
    <property type="entry name" value="D-methionine ABC transporter permease MetI"/>
    <property type="match status" value="1"/>
</dbReference>
<dbReference type="Gene3D" id="1.10.3720.10">
    <property type="entry name" value="MetI-like"/>
    <property type="match status" value="1"/>
</dbReference>
<dbReference type="InterPro" id="IPR051322">
    <property type="entry name" value="AA_ABC_Transporter_Permease"/>
</dbReference>
<dbReference type="InterPro" id="IPR000515">
    <property type="entry name" value="MetI-like"/>
</dbReference>
<dbReference type="InterPro" id="IPR035906">
    <property type="entry name" value="MetI-like_sf"/>
</dbReference>
<dbReference type="NCBIfam" id="NF008049">
    <property type="entry name" value="PRK10782.1"/>
    <property type="match status" value="1"/>
</dbReference>
<dbReference type="PANTHER" id="PTHR30450">
    <property type="entry name" value="ABC TRANSPORTER PERMEASE"/>
    <property type="match status" value="1"/>
</dbReference>
<dbReference type="PANTHER" id="PTHR30450:SF1">
    <property type="entry name" value="D-METHIONINE TRANSPORT SYSTEM PERMEASE PROTEIN METI-RELATED"/>
    <property type="match status" value="1"/>
</dbReference>
<dbReference type="Pfam" id="PF00528">
    <property type="entry name" value="BPD_transp_1"/>
    <property type="match status" value="1"/>
</dbReference>
<dbReference type="SUPFAM" id="SSF161098">
    <property type="entry name" value="MetI-like"/>
    <property type="match status" value="1"/>
</dbReference>
<dbReference type="PROSITE" id="PS50928">
    <property type="entry name" value="ABC_TM1"/>
    <property type="match status" value="1"/>
</dbReference>
<comment type="function">
    <text>Part of the binding-protein-dependent transport system for D-methionine. Probably responsible for the translocation of the substrate across the membrane.</text>
</comment>
<comment type="subcellular location">
    <subcellularLocation>
        <location evidence="1">Cell inner membrane</location>
        <topology evidence="2">Multi-pass membrane protein</topology>
    </subcellularLocation>
</comment>
<comment type="similarity">
    <text evidence="3">Belongs to the binding-protein-dependent transport system permease family. CysTW subfamily.</text>
</comment>
<comment type="sequence caution" evidence="3">
    <conflict type="frameshift">
        <sequence resource="EMBL" id="L42023"/>
    </conflict>
</comment>
<feature type="chain" id="PRO_0000060103" description="Probable D-methionine transport system permease protein MetI">
    <location>
        <begin position="1"/>
        <end position="213"/>
    </location>
</feature>
<feature type="transmembrane region" description="Helical" evidence="2">
    <location>
        <begin position="13"/>
        <end position="33"/>
    </location>
</feature>
<feature type="transmembrane region" description="Helical" evidence="2">
    <location>
        <begin position="50"/>
        <end position="72"/>
    </location>
</feature>
<feature type="transmembrane region" description="Helical" evidence="2">
    <location>
        <begin position="89"/>
        <end position="109"/>
    </location>
</feature>
<feature type="transmembrane region" description="Helical" evidence="2">
    <location>
        <begin position="139"/>
        <end position="159"/>
    </location>
</feature>
<feature type="transmembrane region" description="Helical" evidence="2">
    <location>
        <begin position="183"/>
        <end position="203"/>
    </location>
</feature>
<feature type="domain" description="ABC transmembrane type-1" evidence="2">
    <location>
        <begin position="9"/>
        <end position="202"/>
    </location>
</feature>
<accession>P46492</accession>
<evidence type="ECO:0000250" key="1"/>
<evidence type="ECO:0000255" key="2">
    <source>
        <dbReference type="PROSITE-ProRule" id="PRU00441"/>
    </source>
</evidence>
<evidence type="ECO:0000305" key="3"/>
<protein>
    <recommendedName>
        <fullName>Probable D-methionine transport system permease protein MetI</fullName>
    </recommendedName>
</protein>
<gene>
    <name type="primary">metI</name>
    <name type="ordered locus">HI_0620.1</name>
</gene>
<sequence length="213" mass="22935">MWGVVATATYETVYISFASTLLAVLVGVPVGIWTFLTGKNEILQNNRTHFVLNTIINIGRSIPFIILLLILLPVTRFIVGTVLGTTAAIIPLSICAMPFVARLTANALMEIPNGLTEAAQAMGATKWQIVRKFYLSEALPTLINGVTLTLVTLVGYSAMAGTQGGGGLGSLAINYGRIRNMPYVTWVATIIIVLFVMISQKLGDTLAKKVDHR</sequence>